<evidence type="ECO:0000269" key="1">
    <source>
    </source>
</evidence>
<evidence type="ECO:0000269" key="2">
    <source>
    </source>
</evidence>
<evidence type="ECO:0000269" key="3">
    <source>
    </source>
</evidence>
<evidence type="ECO:0000269" key="4">
    <source>
    </source>
</evidence>
<evidence type="ECO:0000269" key="5">
    <source>
    </source>
</evidence>
<evidence type="ECO:0000305" key="6"/>
<evidence type="ECO:0007829" key="7">
    <source>
        <dbReference type="PDB" id="1MGS"/>
    </source>
</evidence>
<evidence type="ECO:0007829" key="8">
    <source>
        <dbReference type="PDB" id="1MSG"/>
    </source>
</evidence>
<evidence type="ECO:0007829" key="9">
    <source>
        <dbReference type="PDB" id="8K4O"/>
    </source>
</evidence>
<feature type="signal peptide" evidence="1 2 3 4 5">
    <location>
        <begin position="1"/>
        <end position="34"/>
    </location>
</feature>
<feature type="chain" id="PRO_0000005049" description="Growth-regulated alpha protein">
    <location>
        <begin position="35"/>
        <end position="107"/>
    </location>
</feature>
<feature type="chain" id="PRO_0000005050" description="GRO-alpha(4-73)">
    <location>
        <begin position="38"/>
        <end position="107"/>
    </location>
</feature>
<feature type="chain" id="PRO_0000005051" description="GRO-alpha(5-73)">
    <location>
        <begin position="39"/>
        <end position="107"/>
    </location>
</feature>
<feature type="chain" id="PRO_0000005052" description="GRO-alpha(6-73)">
    <location>
        <begin position="40"/>
        <end position="107"/>
    </location>
</feature>
<feature type="disulfide bond">
    <location>
        <begin position="43"/>
        <end position="69"/>
    </location>
</feature>
<feature type="disulfide bond">
    <location>
        <begin position="45"/>
        <end position="85"/>
    </location>
</feature>
<feature type="strand" evidence="8">
    <location>
        <begin position="41"/>
        <end position="43"/>
    </location>
</feature>
<feature type="strand" evidence="9">
    <location>
        <begin position="44"/>
        <end position="47"/>
    </location>
</feature>
<feature type="strand" evidence="8">
    <location>
        <begin position="49"/>
        <end position="51"/>
    </location>
</feature>
<feature type="turn" evidence="7">
    <location>
        <begin position="54"/>
        <end position="56"/>
    </location>
</feature>
<feature type="strand" evidence="9">
    <location>
        <begin position="58"/>
        <end position="62"/>
    </location>
</feature>
<feature type="strand" evidence="9">
    <location>
        <begin position="66"/>
        <end position="68"/>
    </location>
</feature>
<feature type="strand" evidence="9">
    <location>
        <begin position="74"/>
        <end position="79"/>
    </location>
</feature>
<feature type="strand" evidence="9">
    <location>
        <begin position="82"/>
        <end position="84"/>
    </location>
</feature>
<feature type="turn" evidence="9">
    <location>
        <begin position="90"/>
        <end position="92"/>
    </location>
</feature>
<feature type="helix" evidence="9">
    <location>
        <begin position="93"/>
        <end position="96"/>
    </location>
</feature>
<organism>
    <name type="scientific">Homo sapiens</name>
    <name type="common">Human</name>
    <dbReference type="NCBI Taxonomy" id="9606"/>
    <lineage>
        <taxon>Eukaryota</taxon>
        <taxon>Metazoa</taxon>
        <taxon>Chordata</taxon>
        <taxon>Craniata</taxon>
        <taxon>Vertebrata</taxon>
        <taxon>Euteleostomi</taxon>
        <taxon>Mammalia</taxon>
        <taxon>Eutheria</taxon>
        <taxon>Euarchontoglires</taxon>
        <taxon>Primates</taxon>
        <taxon>Haplorrhini</taxon>
        <taxon>Catarrhini</taxon>
        <taxon>Hominidae</taxon>
        <taxon>Homo</taxon>
    </lineage>
</organism>
<sequence length="107" mass="11301">MARAALSAAPSNPRLLRVALLLLLLVAAGRRAAGASVATELRCQCLQTLQGIHPKNIQSVNVKSPGPHCAQTEVIATLKNGRKACLNPASPIVKKIIEKMLNSDKSN</sequence>
<comment type="function">
    <text evidence="1">Has chemotactic activity for neutrophils. May play a role in inflammation and exerts its effects on endothelial cells in an autocrine fashion. In vitro, the processed forms GRO-alpha(4-73), GRO-alpha(5-73) and GRO-alpha(6-73) show a 30-fold higher chemotactic activity.</text>
</comment>
<comment type="interaction">
    <interactant intactId="EBI-2806484">
        <id>P09341</id>
    </interactant>
    <interactant intactId="EBI-16439278">
        <id>Q6FHY5</id>
        <label>MEOX2</label>
    </interactant>
    <organismsDiffer>false</organismsDiffer>
    <experiments>3</experiments>
</comment>
<comment type="subcellular location">
    <subcellularLocation>
        <location>Secreted</location>
    </subcellularLocation>
</comment>
<comment type="PTM">
    <text evidence="1">N-terminal processed forms GRO-alpha(4-73), GRO-alpha(5-73) and GRO-alpha(6-73) are produced by proteolytic cleavage after secretion from peripheral blood monocytes.</text>
</comment>
<comment type="similarity">
    <text evidence="6">Belongs to the intercrine alpha (chemokine CxC) family.</text>
</comment>
<comment type="online information" name="Wikipedia">
    <link uri="https://en.wikipedia.org/wiki/CXCL1"/>
    <text>CXCL1 entry</text>
</comment>
<reference key="1">
    <citation type="journal article" date="1987" name="Proc. Natl. Acad. Sci. U.S.A.">
        <title>Constitutive overexpression of a growth-regulated gene in transformed Chinese hamster and human cells.</title>
        <authorList>
            <person name="Anisowicz A."/>
            <person name="Bardwell L."/>
            <person name="Sager R."/>
        </authorList>
    </citation>
    <scope>NUCLEOTIDE SEQUENCE [MRNA]</scope>
</reference>
<reference key="2">
    <citation type="journal article" date="1988" name="EMBO J.">
        <title>Molecular characterization and chromosomal mapping of melanoma growth stimulatory activity, a growth factor structurally related to beta-thromboglobulin.</title>
        <authorList>
            <person name="Richmond A."/>
            <person name="Balentien E."/>
            <person name="Thomas H.G."/>
            <person name="Flaggs G."/>
            <person name="Barton D.E."/>
            <person name="Spiess J."/>
            <person name="Bordoni R."/>
            <person name="Francke U."/>
            <person name="Derynck R."/>
        </authorList>
    </citation>
    <scope>NUCLEOTIDE SEQUENCE [MRNA]</scope>
</reference>
<reference key="3">
    <citation type="journal article" date="1990" name="Nucleic Acids Res.">
        <title>Nucleotide sequence of the human melanoma growth stimulatory activity (MGSA) gene.</title>
        <authorList>
            <person name="Baker N.E."/>
            <person name="Kucera G."/>
            <person name="Richmond A."/>
        </authorList>
    </citation>
    <scope>NUCLEOTIDE SEQUENCE [GENOMIC DNA]</scope>
    <source>
        <tissue>Blood</tissue>
    </source>
</reference>
<reference key="4">
    <citation type="submission" date="2003-05" db="EMBL/GenBank/DDBJ databases">
        <title>Cloning of human full-length CDSs in BD Creator(TM) system donor vector.</title>
        <authorList>
            <person name="Kalnine N."/>
            <person name="Chen X."/>
            <person name="Rolfs A."/>
            <person name="Halleck A."/>
            <person name="Hines L."/>
            <person name="Eisenstein S."/>
            <person name="Koundinya M."/>
            <person name="Raphael J."/>
            <person name="Moreira D."/>
            <person name="Kelley T."/>
            <person name="LaBaer J."/>
            <person name="Lin Y."/>
            <person name="Phelan M."/>
            <person name="Farmer A."/>
        </authorList>
    </citation>
    <scope>NUCLEOTIDE SEQUENCE [LARGE SCALE MRNA]</scope>
</reference>
<reference key="5">
    <citation type="journal article" date="2004" name="Genome Res.">
        <title>The status, quality, and expansion of the NIH full-length cDNA project: the Mammalian Gene Collection (MGC).</title>
        <authorList>
            <consortium name="The MGC Project Team"/>
        </authorList>
    </citation>
    <scope>NUCLEOTIDE SEQUENCE [LARGE SCALE MRNA]</scope>
    <source>
        <tissue>Ovary</tissue>
    </source>
</reference>
<reference key="6">
    <citation type="journal article" date="1999" name="Eur. J. Biochem.">
        <title>Isolation of the CXC chemokines ENA-78, GRO alpha and GRO gamma from tumor cells and leukocytes reveals NH2-terminal heterogeneity. Functional comparison of different natural isoforms.</title>
        <authorList>
            <person name="Wuyts A."/>
            <person name="Govaerts C."/>
            <person name="Struyf S."/>
            <person name="Lenaerts J.-P."/>
            <person name="Put W."/>
            <person name="Conings R."/>
            <person name="Proost P."/>
            <person name="Van Damme J."/>
        </authorList>
    </citation>
    <scope>PROTEIN SEQUENCE OF 35-107</scope>
    <scope>IDENTIFICATION OF GRO-ALPHA(4-73); GRO-ALPHA(5-73) AND GRO-ALPHA(6-73)</scope>
    <scope>PROTEOLYTIC PROCESSING OF N-TERMINAL</scope>
    <scope>FUNCTION</scope>
    <source>
        <tissue>Peripheral blood monocyte</tissue>
    </source>
</reference>
<reference key="7">
    <citation type="journal article" date="1990" name="J. Exp. Med.">
        <title>Lipopolysaccharide-stimulated human monocytes secrete, apart from neutrophil-activating peptide 1/interleukin 8, a second neutrophil-activating protein. NH2-terminal amino acid sequence identity with melanoma growth stimulatory activity.</title>
        <authorList>
            <person name="Schroeder J.-M."/>
            <person name="Persoon N.L.M."/>
            <person name="Christophers E."/>
        </authorList>
    </citation>
    <scope>PROTEIN SEQUENCE OF 35-65</scope>
</reference>
<reference key="8">
    <citation type="journal article" date="1989" name="Biochem. J.">
        <title>Inflammatory cytokines induce synthesis and secretion of gro protein and a neutrophil chemotactic factor but not beta 2-microglobulin in human synovial cells and fibroblasts.</title>
        <authorList>
            <person name="Golds E.E."/>
            <person name="Mason P."/>
            <person name="Nyirkos P."/>
        </authorList>
    </citation>
    <scope>PROTEIN SEQUENCE OF 35-57</scope>
</reference>
<reference key="9">
    <citation type="journal article" date="1991" name="Adv. Exp. Med. Biol.">
        <title>Biochemical and biological characterization of NAP-1/IL-8-related cytokines in lesional psoriatic scale.</title>
        <authorList>
            <person name="Schroeder J.-M."/>
        </authorList>
    </citation>
    <scope>PROTEIN SEQUENCE OF 35-51</scope>
    <source>
        <tissue>Skin</tissue>
    </source>
</reference>
<reference key="10">
    <citation type="journal article" date="2004" name="Protein Sci.">
        <title>Signal peptide prediction based on analysis of experimentally verified cleavage sites.</title>
        <authorList>
            <person name="Zhang Z."/>
            <person name="Henzel W.J."/>
        </authorList>
    </citation>
    <scope>PROTEIN SEQUENCE OF 35-49</scope>
</reference>
<reference key="11">
    <citation type="journal article" date="1989" name="EMBO J.">
        <title>Expression and secretion of gro/MGSA by stimulated human endothelial cells.</title>
        <authorList>
            <person name="Wen D."/>
            <person name="Rowland A."/>
            <person name="Derynck R."/>
        </authorList>
    </citation>
    <scope>POSSIBLE FUNCTION</scope>
</reference>
<reference key="12">
    <citation type="journal article" date="1993" name="FEBS Lett.">
        <title>1H assignment and secondary structure determination of human melanoma growth stimulating activity (MGSA) by NMR spectroscopy.</title>
        <authorList>
            <person name="Fairbrother W.J."/>
            <person name="Reilly D."/>
            <person name="Colby T."/>
            <person name="Horuk R."/>
        </authorList>
    </citation>
    <scope>STRUCTURE BY NMR</scope>
</reference>
<reference key="13">
    <citation type="journal article" date="1994" name="J. Mol. Biol.">
        <title>The solution structure of melanoma growth stimulating activity.</title>
        <authorList>
            <person name="Fairbrother W.J."/>
            <person name="Reilly D."/>
            <person name="Colby T."/>
            <person name="Hesselgesser J."/>
            <person name="Horuk R."/>
        </authorList>
    </citation>
    <scope>STRUCTURE BY NMR</scope>
</reference>
<reference key="14">
    <citation type="journal article" date="1994" name="J. Biol. Chem.">
        <title>Solution structure of GRO/melanoma growth stimulatory activity determined by 1H NMR spectroscopy.</title>
        <authorList>
            <person name="Kim K.S."/>
            <person name="Clark-Lewis I."/>
            <person name="Sykes B.D."/>
        </authorList>
    </citation>
    <scope>STRUCTURE BY NMR</scope>
</reference>
<protein>
    <recommendedName>
        <fullName>Growth-regulated alpha protein</fullName>
    </recommendedName>
    <alternativeName>
        <fullName>C-X-C motif chemokine 1</fullName>
    </alternativeName>
    <alternativeName>
        <fullName>GRO-alpha(1-73)</fullName>
    </alternativeName>
    <alternativeName>
        <fullName>Melanoma growth stimulatory activity</fullName>
        <shortName>MGSA</shortName>
    </alternativeName>
    <alternativeName>
        <fullName>Neutrophil-activating protein 3</fullName>
        <shortName>NAP-3</shortName>
    </alternativeName>
    <component>
        <recommendedName>
            <fullName>GRO-alpha(4-73)</fullName>
        </recommendedName>
    </component>
    <component>
        <recommendedName>
            <fullName>GRO-alpha(5-73)</fullName>
        </recommendedName>
    </component>
    <component>
        <recommendedName>
            <fullName>GRO-alpha(6-73)</fullName>
        </recommendedName>
    </component>
</protein>
<proteinExistence type="evidence at protein level"/>
<name>GROA_HUMAN</name>
<gene>
    <name type="primary">CXCL1</name>
    <name type="synonym">GRO</name>
    <name type="synonym">GRO1</name>
    <name type="synonym">GROA</name>
    <name type="synonym">MGSA</name>
    <name type="synonym">SCYB1</name>
</gene>
<dbReference type="EMBL" id="J03561">
    <property type="protein sequence ID" value="AAA35933.1"/>
    <property type="molecule type" value="mRNA"/>
</dbReference>
<dbReference type="EMBL" id="X12510">
    <property type="protein sequence ID" value="CAA31027.1"/>
    <property type="molecule type" value="mRNA"/>
</dbReference>
<dbReference type="EMBL" id="X54489">
    <property type="protein sequence ID" value="CAA38361.1"/>
    <property type="molecule type" value="Genomic_DNA"/>
</dbReference>
<dbReference type="EMBL" id="BT006880">
    <property type="protein sequence ID" value="AAP35526.1"/>
    <property type="molecule type" value="mRNA"/>
</dbReference>
<dbReference type="EMBL" id="BC011976">
    <property type="protein sequence ID" value="AAH11976.1"/>
    <property type="molecule type" value="mRNA"/>
</dbReference>
<dbReference type="CCDS" id="CCDS47074.1"/>
<dbReference type="PIR" id="S13669">
    <property type="entry name" value="A28414"/>
</dbReference>
<dbReference type="RefSeq" id="NP_001502.1">
    <property type="nucleotide sequence ID" value="NM_001511.4"/>
</dbReference>
<dbReference type="PDB" id="1MGS">
    <property type="method" value="NMR"/>
    <property type="chains" value="A/B=35-107"/>
</dbReference>
<dbReference type="PDB" id="1MSG">
    <property type="method" value="NMR"/>
    <property type="chains" value="A/B=35-106"/>
</dbReference>
<dbReference type="PDB" id="1MSH">
    <property type="method" value="NMR"/>
    <property type="chains" value="A/B=35-106"/>
</dbReference>
<dbReference type="PDB" id="1ROD">
    <property type="method" value="NMR"/>
    <property type="chains" value="A/B=40-62, A/B=89-107"/>
</dbReference>
<dbReference type="PDB" id="8K4O">
    <property type="method" value="EM"/>
    <property type="resolution" value="3.01 A"/>
    <property type="chains" value="F=35-97"/>
</dbReference>
<dbReference type="PDB" id="8XWA">
    <property type="method" value="EM"/>
    <property type="resolution" value="3.48 A"/>
    <property type="chains" value="D/E=35-107"/>
</dbReference>
<dbReference type="PDB" id="8XWV">
    <property type="method" value="EM"/>
    <property type="resolution" value="3.07 A"/>
    <property type="chains" value="D/E=35-102"/>
</dbReference>
<dbReference type="PDBsum" id="1MGS"/>
<dbReference type="PDBsum" id="1MSG"/>
<dbReference type="PDBsum" id="1MSH"/>
<dbReference type="PDBsum" id="1ROD"/>
<dbReference type="PDBsum" id="8K4O"/>
<dbReference type="PDBsum" id="8XWA"/>
<dbReference type="PDBsum" id="8XWV"/>
<dbReference type="EMDB" id="EMD-36888"/>
<dbReference type="EMDB" id="EMD-38732"/>
<dbReference type="EMDB" id="EMD-38743"/>
<dbReference type="SMR" id="P09341"/>
<dbReference type="BioGRID" id="109176">
    <property type="interactions" value="24"/>
</dbReference>
<dbReference type="DIP" id="DIP-5896N"/>
<dbReference type="FunCoup" id="P09341">
    <property type="interactions" value="1029"/>
</dbReference>
<dbReference type="IntAct" id="P09341">
    <property type="interactions" value="19"/>
</dbReference>
<dbReference type="MINT" id="P09341"/>
<dbReference type="STRING" id="9606.ENSP00000379110"/>
<dbReference type="PhosphoSitePlus" id="P09341"/>
<dbReference type="SwissPalm" id="P09341"/>
<dbReference type="BioMuta" id="CXCL1"/>
<dbReference type="DMDM" id="121622"/>
<dbReference type="jPOST" id="P09341"/>
<dbReference type="MassIVE" id="P09341"/>
<dbReference type="PaxDb" id="9606-ENSP00000379110"/>
<dbReference type="PeptideAtlas" id="P09341"/>
<dbReference type="ProteomicsDB" id="52214"/>
<dbReference type="ABCD" id="P09341">
    <property type="antibodies" value="3 sequenced antibodies"/>
</dbReference>
<dbReference type="Antibodypedia" id="6268">
    <property type="antibodies" value="770 antibodies from 40 providers"/>
</dbReference>
<dbReference type="DNASU" id="2919"/>
<dbReference type="Ensembl" id="ENST00000395761.4">
    <property type="protein sequence ID" value="ENSP00000379110.3"/>
    <property type="gene ID" value="ENSG00000163739.5"/>
</dbReference>
<dbReference type="GeneID" id="2919"/>
<dbReference type="KEGG" id="hsa:2919"/>
<dbReference type="MANE-Select" id="ENST00000395761.4">
    <property type="protein sequence ID" value="ENSP00000379110.3"/>
    <property type="RefSeq nucleotide sequence ID" value="NM_001511.4"/>
    <property type="RefSeq protein sequence ID" value="NP_001502.1"/>
</dbReference>
<dbReference type="UCSC" id="uc003hhh.4">
    <property type="organism name" value="human"/>
</dbReference>
<dbReference type="AGR" id="HGNC:4602"/>
<dbReference type="CTD" id="2919"/>
<dbReference type="DisGeNET" id="2919"/>
<dbReference type="GeneCards" id="CXCL1"/>
<dbReference type="HGNC" id="HGNC:4602">
    <property type="gene designation" value="CXCL1"/>
</dbReference>
<dbReference type="HPA" id="ENSG00000163739">
    <property type="expression patterns" value="Tissue enhanced (cervix, lymphoid tissue)"/>
</dbReference>
<dbReference type="MIM" id="155730">
    <property type="type" value="gene"/>
</dbReference>
<dbReference type="neXtProt" id="NX_P09341"/>
<dbReference type="OpenTargets" id="ENSG00000163739"/>
<dbReference type="PharmGKB" id="PA35050"/>
<dbReference type="VEuPathDB" id="HostDB:ENSG00000163739"/>
<dbReference type="eggNOG" id="ENOG502S7MM">
    <property type="taxonomic scope" value="Eukaryota"/>
</dbReference>
<dbReference type="GeneTree" id="ENSGT00940000164504"/>
<dbReference type="HOGENOM" id="CLU_143902_1_1_1"/>
<dbReference type="InParanoid" id="P09341"/>
<dbReference type="OMA" id="NTELRCR"/>
<dbReference type="OrthoDB" id="8872899at2759"/>
<dbReference type="PAN-GO" id="P09341">
    <property type="GO annotations" value="8 GO annotations based on evolutionary models"/>
</dbReference>
<dbReference type="PhylomeDB" id="P09341"/>
<dbReference type="TreeFam" id="TF333433"/>
<dbReference type="PathwayCommons" id="P09341"/>
<dbReference type="Reactome" id="R-HSA-380108">
    <property type="pathway name" value="Chemokine receptors bind chemokines"/>
</dbReference>
<dbReference type="Reactome" id="R-HSA-418594">
    <property type="pathway name" value="G alpha (i) signalling events"/>
</dbReference>
<dbReference type="Reactome" id="R-HSA-6783783">
    <property type="pathway name" value="Interleukin-10 signaling"/>
</dbReference>
<dbReference type="Reactome" id="R-HSA-6798695">
    <property type="pathway name" value="Neutrophil degranulation"/>
</dbReference>
<dbReference type="SignaLink" id="P09341"/>
<dbReference type="SIGNOR" id="P09341"/>
<dbReference type="BioGRID-ORCS" id="2919">
    <property type="hits" value="15 hits in 1093 CRISPR screens"/>
</dbReference>
<dbReference type="ChiTaRS" id="CXCL1">
    <property type="organism name" value="human"/>
</dbReference>
<dbReference type="EvolutionaryTrace" id="P09341"/>
<dbReference type="GeneWiki" id="CXCL1"/>
<dbReference type="GenomeRNAi" id="2919"/>
<dbReference type="Pharos" id="P09341">
    <property type="development level" value="Tbio"/>
</dbReference>
<dbReference type="PRO" id="PR:P09341"/>
<dbReference type="Proteomes" id="UP000005640">
    <property type="component" value="Chromosome 4"/>
</dbReference>
<dbReference type="RNAct" id="P09341">
    <property type="molecule type" value="protein"/>
</dbReference>
<dbReference type="Bgee" id="ENSG00000163739">
    <property type="expression patterns" value="Expressed in olfactory segment of nasal mucosa and 157 other cell types or tissues"/>
</dbReference>
<dbReference type="GO" id="GO:0005576">
    <property type="term" value="C:extracellular region"/>
    <property type="evidence" value="ECO:0000304"/>
    <property type="project" value="Reactome"/>
</dbReference>
<dbReference type="GO" id="GO:0005615">
    <property type="term" value="C:extracellular space"/>
    <property type="evidence" value="ECO:0000304"/>
    <property type="project" value="ProtInc"/>
</dbReference>
<dbReference type="GO" id="GO:0035580">
    <property type="term" value="C:specific granule lumen"/>
    <property type="evidence" value="ECO:0000304"/>
    <property type="project" value="Reactome"/>
</dbReference>
<dbReference type="GO" id="GO:1904724">
    <property type="term" value="C:tertiary granule lumen"/>
    <property type="evidence" value="ECO:0000304"/>
    <property type="project" value="Reactome"/>
</dbReference>
<dbReference type="GO" id="GO:0008009">
    <property type="term" value="F:chemokine activity"/>
    <property type="evidence" value="ECO:0000304"/>
    <property type="project" value="ProtInc"/>
</dbReference>
<dbReference type="GO" id="GO:0008047">
    <property type="term" value="F:enzyme activator activity"/>
    <property type="evidence" value="ECO:0000304"/>
    <property type="project" value="ProtInc"/>
</dbReference>
<dbReference type="GO" id="GO:0008083">
    <property type="term" value="F:growth factor activity"/>
    <property type="evidence" value="ECO:0000304"/>
    <property type="project" value="GO_Central"/>
</dbReference>
<dbReference type="GO" id="GO:0005102">
    <property type="term" value="F:signaling receptor binding"/>
    <property type="evidence" value="ECO:0000304"/>
    <property type="project" value="ProtInc"/>
</dbReference>
<dbReference type="GO" id="GO:0030036">
    <property type="term" value="P:actin cytoskeleton organization"/>
    <property type="evidence" value="ECO:0000304"/>
    <property type="project" value="ProtInc"/>
</dbReference>
<dbReference type="GO" id="GO:0006935">
    <property type="term" value="P:chemotaxis"/>
    <property type="evidence" value="ECO:0000304"/>
    <property type="project" value="ProtInc"/>
</dbReference>
<dbReference type="GO" id="GO:0007186">
    <property type="term" value="P:G protein-coupled receptor signaling pathway"/>
    <property type="evidence" value="ECO:0000304"/>
    <property type="project" value="ProtInc"/>
</dbReference>
<dbReference type="GO" id="GO:0006955">
    <property type="term" value="P:immune response"/>
    <property type="evidence" value="ECO:0007669"/>
    <property type="project" value="InterPro"/>
</dbReference>
<dbReference type="GO" id="GO:0006954">
    <property type="term" value="P:inflammatory response"/>
    <property type="evidence" value="ECO:0000304"/>
    <property type="project" value="ProtInc"/>
</dbReference>
<dbReference type="GO" id="GO:0035556">
    <property type="term" value="P:intracellular signal transduction"/>
    <property type="evidence" value="ECO:0000304"/>
    <property type="project" value="ProtInc"/>
</dbReference>
<dbReference type="GO" id="GO:0008285">
    <property type="term" value="P:negative regulation of cell population proliferation"/>
    <property type="evidence" value="ECO:0000304"/>
    <property type="project" value="ProtInc"/>
</dbReference>
<dbReference type="GO" id="GO:0007399">
    <property type="term" value="P:nervous system development"/>
    <property type="evidence" value="ECO:0000304"/>
    <property type="project" value="ProtInc"/>
</dbReference>
<dbReference type="GO" id="GO:0007165">
    <property type="term" value="P:signal transduction"/>
    <property type="evidence" value="ECO:0000304"/>
    <property type="project" value="ProtInc"/>
</dbReference>
<dbReference type="CDD" id="cd00273">
    <property type="entry name" value="Chemokine_CXC"/>
    <property type="match status" value="1"/>
</dbReference>
<dbReference type="FunFam" id="2.40.50.40:FF:000004">
    <property type="entry name" value="C-X-C motif chemokine"/>
    <property type="match status" value="1"/>
</dbReference>
<dbReference type="Gene3D" id="2.40.50.40">
    <property type="match status" value="1"/>
</dbReference>
<dbReference type="InterPro" id="IPR039809">
    <property type="entry name" value="Chemokine_b/g/d"/>
</dbReference>
<dbReference type="InterPro" id="IPR001089">
    <property type="entry name" value="Chemokine_CXC"/>
</dbReference>
<dbReference type="InterPro" id="IPR018048">
    <property type="entry name" value="Chemokine_CXC_CS"/>
</dbReference>
<dbReference type="InterPro" id="IPR001811">
    <property type="entry name" value="Chemokine_IL8-like_dom"/>
</dbReference>
<dbReference type="InterPro" id="IPR033899">
    <property type="entry name" value="CXC_Chemokine_domain"/>
</dbReference>
<dbReference type="InterPro" id="IPR036048">
    <property type="entry name" value="Interleukin_8-like_sf"/>
</dbReference>
<dbReference type="PANTHER" id="PTHR12015:SF192">
    <property type="entry name" value="GROWTH-REGULATED ALPHA PROTEIN"/>
    <property type="match status" value="1"/>
</dbReference>
<dbReference type="PANTHER" id="PTHR12015">
    <property type="entry name" value="SMALL INDUCIBLE CYTOKINE A"/>
    <property type="match status" value="1"/>
</dbReference>
<dbReference type="Pfam" id="PF00048">
    <property type="entry name" value="IL8"/>
    <property type="match status" value="1"/>
</dbReference>
<dbReference type="PRINTS" id="PR00436">
    <property type="entry name" value="INTERLEUKIN8"/>
</dbReference>
<dbReference type="PRINTS" id="PR00437">
    <property type="entry name" value="SMALLCYTKCXC"/>
</dbReference>
<dbReference type="SMART" id="SM00199">
    <property type="entry name" value="SCY"/>
    <property type="match status" value="1"/>
</dbReference>
<dbReference type="SUPFAM" id="SSF54117">
    <property type="entry name" value="Interleukin 8-like chemokines"/>
    <property type="match status" value="1"/>
</dbReference>
<dbReference type="PROSITE" id="PS00471">
    <property type="entry name" value="SMALL_CYTOKINES_CXC"/>
    <property type="match status" value="1"/>
</dbReference>
<keyword id="KW-0002">3D-structure</keyword>
<keyword id="KW-0202">Cytokine</keyword>
<keyword id="KW-0903">Direct protein sequencing</keyword>
<keyword id="KW-1015">Disulfide bond</keyword>
<keyword id="KW-0339">Growth factor</keyword>
<keyword id="KW-0395">Inflammatory response</keyword>
<keyword id="KW-1267">Proteomics identification</keyword>
<keyword id="KW-1185">Reference proteome</keyword>
<keyword id="KW-0964">Secreted</keyword>
<keyword id="KW-0732">Signal</keyword>
<accession>P09341</accession>
<accession>Q9UCR7</accession>